<organism>
    <name type="scientific">Opisthocomus hoazin</name>
    <name type="common">Hoatzin</name>
    <name type="synonym">Phasianus hoazin</name>
    <dbReference type="NCBI Taxonomy" id="30419"/>
    <lineage>
        <taxon>Eukaryota</taxon>
        <taxon>Metazoa</taxon>
        <taxon>Chordata</taxon>
        <taxon>Craniata</taxon>
        <taxon>Vertebrata</taxon>
        <taxon>Euteleostomi</taxon>
        <taxon>Archelosauria</taxon>
        <taxon>Archosauria</taxon>
        <taxon>Dinosauria</taxon>
        <taxon>Saurischia</taxon>
        <taxon>Theropoda</taxon>
        <taxon>Coelurosauria</taxon>
        <taxon>Aves</taxon>
        <taxon>Neognathae</taxon>
        <taxon>Neoaves</taxon>
        <taxon>Opisthocomiformes</taxon>
        <taxon>Opisthocomidae</taxon>
        <taxon>Opisthocomus</taxon>
    </lineage>
</organism>
<accession>Q91159</accession>
<protein>
    <recommendedName>
        <fullName>Lysozyme C</fullName>
        <ecNumber>3.2.1.17</ecNumber>
    </recommendedName>
    <alternativeName>
        <fullName>1,4-beta-N-acetylmuramidase C</fullName>
    </alternativeName>
</protein>
<comment type="function">
    <text>Lysozymes have primarily a bacteriolytic function; those in tissues and body fluids are associated with the monocyte-macrophage system and enhance the activity of immunoagents.</text>
</comment>
<comment type="catalytic activity">
    <reaction>
        <text>Hydrolysis of (1-&gt;4)-beta-linkages between N-acetylmuramic acid and N-acetyl-D-glucosamine residues in a peptidoglycan and between N-acetyl-D-glucosamine residues in chitodextrins.</text>
        <dbReference type="EC" id="3.2.1.17"/>
    </reaction>
</comment>
<comment type="subunit">
    <text>Monomer.</text>
</comment>
<comment type="subcellular location">
    <subcellularLocation>
        <location evidence="1">Secreted</location>
    </subcellularLocation>
</comment>
<comment type="miscellaneous">
    <text>Lysozyme C is capable of both hydrolysis and transglycosylation; it also shows a slight esterase activity. It acts rapidly on both peptide-substituted and unsubstituted peptidoglycan, and slowly on chitin oligosaccharides.</text>
</comment>
<comment type="similarity">
    <text evidence="3">Belongs to the glycosyl hydrolase 22 family.</text>
</comment>
<feature type="signal peptide" evidence="2">
    <location>
        <begin position="1"/>
        <end position="19"/>
    </location>
</feature>
<feature type="chain" id="PRO_0000018498" description="Lysozyme C">
    <location>
        <begin position="20"/>
        <end position="145"/>
    </location>
</feature>
<feature type="domain" description="C-type lysozyme" evidence="3">
    <location>
        <begin position="20"/>
        <end position="145"/>
    </location>
</feature>
<feature type="active site" evidence="3">
    <location>
        <position position="54"/>
    </location>
</feature>
<feature type="active site" evidence="3">
    <location>
        <position position="70"/>
    </location>
</feature>
<feature type="disulfide bond" evidence="3">
    <location>
        <begin position="25"/>
        <end position="145"/>
    </location>
</feature>
<feature type="disulfide bond" evidence="3">
    <location>
        <begin position="49"/>
        <end position="133"/>
    </location>
</feature>
<feature type="disulfide bond" evidence="3">
    <location>
        <begin position="82"/>
        <end position="98"/>
    </location>
</feature>
<feature type="disulfide bond" evidence="3">
    <location>
        <begin position="94"/>
        <end position="112"/>
    </location>
</feature>
<feature type="sequence variant" description="In 50% of the molecules.">
    <original>P</original>
    <variation>S</variation>
    <location>
        <position position="23"/>
    </location>
</feature>
<feature type="helix" evidence="4">
    <location>
        <begin position="24"/>
        <end position="33"/>
    </location>
</feature>
<feature type="helix" evidence="4">
    <location>
        <begin position="39"/>
        <end position="41"/>
    </location>
</feature>
<feature type="helix" evidence="4">
    <location>
        <begin position="44"/>
        <end position="54"/>
    </location>
</feature>
<feature type="turn" evidence="4">
    <location>
        <begin position="55"/>
        <end position="57"/>
    </location>
</feature>
<feature type="strand" evidence="4">
    <location>
        <begin position="62"/>
        <end position="64"/>
    </location>
</feature>
<feature type="strand" evidence="4">
    <location>
        <begin position="69"/>
        <end position="71"/>
    </location>
</feature>
<feature type="turn" evidence="4">
    <location>
        <begin position="72"/>
        <end position="75"/>
    </location>
</feature>
<feature type="turn" evidence="4">
    <location>
        <begin position="78"/>
        <end position="80"/>
    </location>
</feature>
<feature type="helix" evidence="4">
    <location>
        <begin position="98"/>
        <end position="102"/>
    </location>
</feature>
<feature type="helix" evidence="4">
    <location>
        <begin position="107"/>
        <end position="120"/>
    </location>
</feature>
<feature type="helix" evidence="4">
    <location>
        <begin position="127"/>
        <end position="132"/>
    </location>
</feature>
<feature type="turn" evidence="4">
    <location>
        <begin position="133"/>
        <end position="135"/>
    </location>
</feature>
<feature type="helix" evidence="4">
    <location>
        <begin position="139"/>
        <end position="142"/>
    </location>
</feature>
<dbReference type="EC" id="3.2.1.17"/>
<dbReference type="EMBL" id="L36032">
    <property type="protein sequence ID" value="AAA73935.1"/>
    <property type="molecule type" value="mRNA"/>
</dbReference>
<dbReference type="PIR" id="A55241">
    <property type="entry name" value="A55241"/>
</dbReference>
<dbReference type="PDB" id="6T5S">
    <property type="method" value="X-ray"/>
    <property type="resolution" value="1.50 A"/>
    <property type="chains" value="A=20-145"/>
</dbReference>
<dbReference type="PDB" id="6T6C">
    <property type="method" value="X-ray"/>
    <property type="resolution" value="1.25 A"/>
    <property type="chains" value="A=21-145"/>
</dbReference>
<dbReference type="PDBsum" id="6T5S"/>
<dbReference type="PDBsum" id="6T6C"/>
<dbReference type="SMR" id="Q91159"/>
<dbReference type="CAZy" id="GH22">
    <property type="family name" value="Glycoside Hydrolase Family 22"/>
</dbReference>
<dbReference type="GO" id="GO:0005576">
    <property type="term" value="C:extracellular region"/>
    <property type="evidence" value="ECO:0007669"/>
    <property type="project" value="UniProtKB-SubCell"/>
</dbReference>
<dbReference type="GO" id="GO:0003796">
    <property type="term" value="F:lysozyme activity"/>
    <property type="evidence" value="ECO:0007669"/>
    <property type="project" value="UniProtKB-EC"/>
</dbReference>
<dbReference type="GO" id="GO:0042742">
    <property type="term" value="P:defense response to bacterium"/>
    <property type="evidence" value="ECO:0007669"/>
    <property type="project" value="UniProtKB-KW"/>
</dbReference>
<dbReference type="GO" id="GO:0031640">
    <property type="term" value="P:killing of cells of another organism"/>
    <property type="evidence" value="ECO:0007669"/>
    <property type="project" value="UniProtKB-KW"/>
</dbReference>
<dbReference type="CDD" id="cd16897">
    <property type="entry name" value="LYZ_C"/>
    <property type="match status" value="1"/>
</dbReference>
<dbReference type="FunFam" id="1.10.530.10:FF:000001">
    <property type="entry name" value="Lysozyme C"/>
    <property type="match status" value="1"/>
</dbReference>
<dbReference type="Gene3D" id="1.10.530.10">
    <property type="match status" value="1"/>
</dbReference>
<dbReference type="InterPro" id="IPR001916">
    <property type="entry name" value="Glyco_hydro_22"/>
</dbReference>
<dbReference type="InterPro" id="IPR019799">
    <property type="entry name" value="Glyco_hydro_22_CS"/>
</dbReference>
<dbReference type="InterPro" id="IPR000974">
    <property type="entry name" value="Glyco_hydro_22_lys"/>
</dbReference>
<dbReference type="InterPro" id="IPR023346">
    <property type="entry name" value="Lysozyme-like_dom_sf"/>
</dbReference>
<dbReference type="PANTHER" id="PTHR11407">
    <property type="entry name" value="LYSOZYME C"/>
    <property type="match status" value="1"/>
</dbReference>
<dbReference type="PANTHER" id="PTHR11407:SF63">
    <property type="entry name" value="LYSOZYME C"/>
    <property type="match status" value="1"/>
</dbReference>
<dbReference type="Pfam" id="PF00062">
    <property type="entry name" value="Lys"/>
    <property type="match status" value="1"/>
</dbReference>
<dbReference type="PRINTS" id="PR00137">
    <property type="entry name" value="LYSOZYME"/>
</dbReference>
<dbReference type="PRINTS" id="PR00135">
    <property type="entry name" value="LYZLACT"/>
</dbReference>
<dbReference type="SMART" id="SM00263">
    <property type="entry name" value="LYZ1"/>
    <property type="match status" value="1"/>
</dbReference>
<dbReference type="SUPFAM" id="SSF53955">
    <property type="entry name" value="Lysozyme-like"/>
    <property type="match status" value="1"/>
</dbReference>
<dbReference type="PROSITE" id="PS00128">
    <property type="entry name" value="GLYCOSYL_HYDROL_F22_1"/>
    <property type="match status" value="1"/>
</dbReference>
<dbReference type="PROSITE" id="PS51348">
    <property type="entry name" value="GLYCOSYL_HYDROL_F22_2"/>
    <property type="match status" value="1"/>
</dbReference>
<name>LYSC_OPIHO</name>
<evidence type="ECO:0000250" key="1"/>
<evidence type="ECO:0000255" key="2"/>
<evidence type="ECO:0000255" key="3">
    <source>
        <dbReference type="PROSITE-ProRule" id="PRU00680"/>
    </source>
</evidence>
<evidence type="ECO:0007829" key="4">
    <source>
        <dbReference type="PDB" id="6T6C"/>
    </source>
</evidence>
<sequence>MLFFGFLLAFLSAVPGTEGEIIPRCELVKILREHGFEGFEGTTIADWICLVQHESDYNTEAYNNNGPSRDYGIFQINSKYWCNDGKTSGAVDGCHISCSELMTNDLEDDIKCAKKIARDAHGLTPWYGWKNHCEGRDLSSYVKGC</sequence>
<reference key="1">
    <citation type="journal article" date="1994" name="Mol. Biol. Evol.">
        <title>Molecular adaptation of a leaf-eating bird: stomach lysozyme of the hoatzin.</title>
        <authorList>
            <person name="Kornegay J.R."/>
            <person name="Schilling J.W."/>
            <person name="Wilson A.C."/>
        </authorList>
    </citation>
    <scope>NUCLEOTIDE SEQUENCE [MRNA]</scope>
    <source>
        <tissue>Stomach</tissue>
    </source>
</reference>
<gene>
    <name type="primary">LYZ</name>
</gene>
<keyword id="KW-0002">3D-structure</keyword>
<keyword id="KW-0929">Antimicrobial</keyword>
<keyword id="KW-0081">Bacteriolytic enzyme</keyword>
<keyword id="KW-1015">Disulfide bond</keyword>
<keyword id="KW-0326">Glycosidase</keyword>
<keyword id="KW-0378">Hydrolase</keyword>
<keyword id="KW-0964">Secreted</keyword>
<keyword id="KW-0732">Signal</keyword>
<proteinExistence type="evidence at protein level"/>